<dbReference type="EC" id="5.4.99.62" evidence="1"/>
<dbReference type="EMBL" id="CP000057">
    <property type="protein sequence ID" value="AAX87552.1"/>
    <property type="molecule type" value="Genomic_DNA"/>
</dbReference>
<dbReference type="RefSeq" id="WP_005664526.1">
    <property type="nucleotide sequence ID" value="NC_007146.2"/>
</dbReference>
<dbReference type="SMR" id="Q4QN45"/>
<dbReference type="GeneID" id="93219512"/>
<dbReference type="KEGG" id="hit:NTHI0629"/>
<dbReference type="HOGENOM" id="CLU_135498_0_0_6"/>
<dbReference type="UniPathway" id="UPA00916">
    <property type="reaction ID" value="UER00888"/>
</dbReference>
<dbReference type="Proteomes" id="UP000002525">
    <property type="component" value="Chromosome"/>
</dbReference>
<dbReference type="GO" id="GO:0005829">
    <property type="term" value="C:cytosol"/>
    <property type="evidence" value="ECO:0007669"/>
    <property type="project" value="TreeGrafter"/>
</dbReference>
<dbReference type="GO" id="GO:0062193">
    <property type="term" value="F:D-ribose pyranase activity"/>
    <property type="evidence" value="ECO:0007669"/>
    <property type="project" value="UniProtKB-EC"/>
</dbReference>
<dbReference type="GO" id="GO:0016872">
    <property type="term" value="F:intramolecular lyase activity"/>
    <property type="evidence" value="ECO:0007669"/>
    <property type="project" value="UniProtKB-UniRule"/>
</dbReference>
<dbReference type="GO" id="GO:0048029">
    <property type="term" value="F:monosaccharide binding"/>
    <property type="evidence" value="ECO:0007669"/>
    <property type="project" value="InterPro"/>
</dbReference>
<dbReference type="GO" id="GO:0019303">
    <property type="term" value="P:D-ribose catabolic process"/>
    <property type="evidence" value="ECO:0007669"/>
    <property type="project" value="UniProtKB-UniRule"/>
</dbReference>
<dbReference type="FunFam" id="3.40.1650.10:FF:000002">
    <property type="entry name" value="D-ribose pyranase"/>
    <property type="match status" value="1"/>
</dbReference>
<dbReference type="Gene3D" id="3.40.1650.10">
    <property type="entry name" value="RbsD-like domain"/>
    <property type="match status" value="1"/>
</dbReference>
<dbReference type="HAMAP" id="MF_01661">
    <property type="entry name" value="D_rib_pyranase"/>
    <property type="match status" value="1"/>
</dbReference>
<dbReference type="InterPro" id="IPR023064">
    <property type="entry name" value="D-ribose_pyranase"/>
</dbReference>
<dbReference type="InterPro" id="IPR023750">
    <property type="entry name" value="RbsD-like_sf"/>
</dbReference>
<dbReference type="InterPro" id="IPR007721">
    <property type="entry name" value="RbsD_FucU"/>
</dbReference>
<dbReference type="NCBIfam" id="NF008761">
    <property type="entry name" value="PRK11797.1"/>
    <property type="match status" value="1"/>
</dbReference>
<dbReference type="PANTHER" id="PTHR37831">
    <property type="entry name" value="D-RIBOSE PYRANASE"/>
    <property type="match status" value="1"/>
</dbReference>
<dbReference type="PANTHER" id="PTHR37831:SF1">
    <property type="entry name" value="D-RIBOSE PYRANASE"/>
    <property type="match status" value="1"/>
</dbReference>
<dbReference type="Pfam" id="PF05025">
    <property type="entry name" value="RbsD_FucU"/>
    <property type="match status" value="1"/>
</dbReference>
<dbReference type="SUPFAM" id="SSF102546">
    <property type="entry name" value="RbsD-like"/>
    <property type="match status" value="1"/>
</dbReference>
<gene>
    <name evidence="1" type="primary">rbsD</name>
    <name type="ordered locus">NTHI0629</name>
</gene>
<name>RBSD_HAEI8</name>
<feature type="chain" id="PRO_0000346208" description="D-ribose pyranase">
    <location>
        <begin position="1"/>
        <end position="139"/>
    </location>
</feature>
<feature type="active site" description="Proton donor" evidence="1">
    <location>
        <position position="20"/>
    </location>
</feature>
<feature type="binding site" evidence="1">
    <location>
        <position position="28"/>
    </location>
    <ligand>
        <name>substrate</name>
    </ligand>
</feature>
<feature type="binding site" evidence="1">
    <location>
        <position position="106"/>
    </location>
    <ligand>
        <name>substrate</name>
    </ligand>
</feature>
<feature type="binding site" evidence="1">
    <location>
        <begin position="128"/>
        <end position="130"/>
    </location>
    <ligand>
        <name>substrate</name>
    </ligand>
</feature>
<comment type="function">
    <text evidence="1">Catalyzes the interconversion of beta-pyran and beta-furan forms of D-ribose.</text>
</comment>
<comment type="catalytic activity">
    <reaction evidence="1">
        <text>beta-D-ribopyranose = beta-D-ribofuranose</text>
        <dbReference type="Rhea" id="RHEA:25432"/>
        <dbReference type="ChEBI" id="CHEBI:27476"/>
        <dbReference type="ChEBI" id="CHEBI:47002"/>
        <dbReference type="EC" id="5.4.99.62"/>
    </reaction>
</comment>
<comment type="pathway">
    <text evidence="1">Carbohydrate metabolism; D-ribose degradation; D-ribose 5-phosphate from beta-D-ribopyranose: step 1/2.</text>
</comment>
<comment type="subunit">
    <text evidence="1">Homodecamer.</text>
</comment>
<comment type="subcellular location">
    <subcellularLocation>
        <location evidence="1">Cytoplasm</location>
    </subcellularLocation>
</comment>
<comment type="similarity">
    <text evidence="1">Belongs to the RbsD / FucU family. RbsD subfamily.</text>
</comment>
<reference key="1">
    <citation type="journal article" date="2005" name="J. Bacteriol.">
        <title>Genomic sequence of an otitis media isolate of nontypeable Haemophilus influenzae: comparative study with H. influenzae serotype d, strain KW20.</title>
        <authorList>
            <person name="Harrison A."/>
            <person name="Dyer D.W."/>
            <person name="Gillaspy A."/>
            <person name="Ray W.C."/>
            <person name="Mungur R."/>
            <person name="Carson M.B."/>
            <person name="Zhong H."/>
            <person name="Gipson J."/>
            <person name="Gipson M."/>
            <person name="Johnson L.S."/>
            <person name="Lewis L."/>
            <person name="Bakaletz L.O."/>
            <person name="Munson R.S. Jr."/>
        </authorList>
    </citation>
    <scope>NUCLEOTIDE SEQUENCE [LARGE SCALE GENOMIC DNA]</scope>
    <source>
        <strain>86-028NP</strain>
    </source>
</reference>
<proteinExistence type="inferred from homology"/>
<evidence type="ECO:0000255" key="1">
    <source>
        <dbReference type="HAMAP-Rule" id="MF_01661"/>
    </source>
</evidence>
<organism>
    <name type="scientific">Haemophilus influenzae (strain 86-028NP)</name>
    <dbReference type="NCBI Taxonomy" id="281310"/>
    <lineage>
        <taxon>Bacteria</taxon>
        <taxon>Pseudomonadati</taxon>
        <taxon>Pseudomonadota</taxon>
        <taxon>Gammaproteobacteria</taxon>
        <taxon>Pasteurellales</taxon>
        <taxon>Pasteurellaceae</taxon>
        <taxon>Haemophilus</taxon>
    </lineage>
</organism>
<accession>Q4QN45</accession>
<keyword id="KW-0119">Carbohydrate metabolism</keyword>
<keyword id="KW-0963">Cytoplasm</keyword>
<keyword id="KW-0413">Isomerase</keyword>
<sequence>MKKTMLLNAQLSRCIASVGHTESLTICDAGLPIPLSVERIDLALTAGVPSFLQTLNVVTNEMYVERVVIAEEIKEKNPEILTALLTQLQQLESHQGNQIQVEFVSHETFKKFTLESKAIVRTGECSPYANVILYSGVPF</sequence>
<protein>
    <recommendedName>
        <fullName evidence="1">D-ribose pyranase</fullName>
        <ecNumber evidence="1">5.4.99.62</ecNumber>
    </recommendedName>
</protein>